<protein>
    <recommendedName>
        <fullName evidence="1">Kynureninase 1</fullName>
        <ecNumber evidence="1">3.7.1.3</ecNumber>
    </recommendedName>
    <alternativeName>
        <fullName evidence="1">Biosynthesis of nicotinic acid protein 5-1</fullName>
    </alternativeName>
    <alternativeName>
        <fullName evidence="1">L-kynurenine hydrolase 1</fullName>
    </alternativeName>
</protein>
<organism>
    <name type="scientific">Phaeosphaeria nodorum (strain SN15 / ATCC MYA-4574 / FGSC 10173)</name>
    <name type="common">Glume blotch fungus</name>
    <name type="synonym">Parastagonospora nodorum</name>
    <dbReference type="NCBI Taxonomy" id="321614"/>
    <lineage>
        <taxon>Eukaryota</taxon>
        <taxon>Fungi</taxon>
        <taxon>Dikarya</taxon>
        <taxon>Ascomycota</taxon>
        <taxon>Pezizomycotina</taxon>
        <taxon>Dothideomycetes</taxon>
        <taxon>Pleosporomycetidae</taxon>
        <taxon>Pleosporales</taxon>
        <taxon>Pleosporineae</taxon>
        <taxon>Phaeosphaeriaceae</taxon>
        <taxon>Parastagonospora</taxon>
    </lineage>
</organism>
<evidence type="ECO:0000255" key="1">
    <source>
        <dbReference type="HAMAP-Rule" id="MF_03017"/>
    </source>
</evidence>
<evidence type="ECO:0000256" key="2">
    <source>
        <dbReference type="SAM" id="MobiDB-lite"/>
    </source>
</evidence>
<comment type="function">
    <text evidence="1">Catalyzes the cleavage of L-kynurenine (L-Kyn) and L-3-hydroxykynurenine (L-3OHKyn) into anthranilic acid (AA) and 3-hydroxyanthranilic acid (3-OHAA), respectively.</text>
</comment>
<comment type="catalytic activity">
    <reaction evidence="1">
        <text>L-kynurenine + H2O = anthranilate + L-alanine + H(+)</text>
        <dbReference type="Rhea" id="RHEA:16813"/>
        <dbReference type="ChEBI" id="CHEBI:15377"/>
        <dbReference type="ChEBI" id="CHEBI:15378"/>
        <dbReference type="ChEBI" id="CHEBI:16567"/>
        <dbReference type="ChEBI" id="CHEBI:57959"/>
        <dbReference type="ChEBI" id="CHEBI:57972"/>
        <dbReference type="EC" id="3.7.1.3"/>
    </reaction>
</comment>
<comment type="catalytic activity">
    <reaction evidence="1">
        <text>3-hydroxy-L-kynurenine + H2O = 3-hydroxyanthranilate + L-alanine + H(+)</text>
        <dbReference type="Rhea" id="RHEA:25143"/>
        <dbReference type="ChEBI" id="CHEBI:15377"/>
        <dbReference type="ChEBI" id="CHEBI:15378"/>
        <dbReference type="ChEBI" id="CHEBI:36559"/>
        <dbReference type="ChEBI" id="CHEBI:57972"/>
        <dbReference type="ChEBI" id="CHEBI:58125"/>
        <dbReference type="EC" id="3.7.1.3"/>
    </reaction>
</comment>
<comment type="cofactor">
    <cofactor evidence="1">
        <name>pyridoxal 5'-phosphate</name>
        <dbReference type="ChEBI" id="CHEBI:597326"/>
    </cofactor>
</comment>
<comment type="pathway">
    <text evidence="1">Amino-acid degradation; L-kynurenine degradation; L-alanine and anthranilate from L-kynurenine: step 1/1.</text>
</comment>
<comment type="pathway">
    <text evidence="1">Cofactor biosynthesis; NAD(+) biosynthesis; quinolinate from L-kynurenine: step 2/3.</text>
</comment>
<comment type="subunit">
    <text evidence="1">Homodimer.</text>
</comment>
<comment type="subcellular location">
    <subcellularLocation>
        <location evidence="1">Cytoplasm</location>
    </subcellularLocation>
</comment>
<comment type="similarity">
    <text evidence="1">Belongs to the kynureninase family.</text>
</comment>
<dbReference type="EC" id="3.7.1.3" evidence="1"/>
<dbReference type="EMBL" id="CH445336">
    <property type="protein sequence ID" value="EAT84658.1"/>
    <property type="molecule type" value="Genomic_DNA"/>
</dbReference>
<dbReference type="RefSeq" id="XP_001798697.1">
    <property type="nucleotide sequence ID" value="XM_001798645.1"/>
</dbReference>
<dbReference type="SMR" id="Q0UIN2"/>
<dbReference type="FunCoup" id="Q0UIN2">
    <property type="interactions" value="182"/>
</dbReference>
<dbReference type="STRING" id="321614.Q0UIN2"/>
<dbReference type="EnsemblFungi" id="SNOT_08382">
    <property type="protein sequence ID" value="SNOT_08382"/>
    <property type="gene ID" value="SNOG_08382"/>
</dbReference>
<dbReference type="GeneID" id="5975595"/>
<dbReference type="KEGG" id="pno:SNOG_08382"/>
<dbReference type="VEuPathDB" id="FungiDB:JI435_083820"/>
<dbReference type="eggNOG" id="KOG3846">
    <property type="taxonomic scope" value="Eukaryota"/>
</dbReference>
<dbReference type="HOGENOM" id="CLU_003433_4_0_1"/>
<dbReference type="InParanoid" id="Q0UIN2"/>
<dbReference type="OMA" id="LPGWNSH"/>
<dbReference type="OrthoDB" id="5978656at2759"/>
<dbReference type="UniPathway" id="UPA00253">
    <property type="reaction ID" value="UER00329"/>
</dbReference>
<dbReference type="UniPathway" id="UPA00334">
    <property type="reaction ID" value="UER00455"/>
</dbReference>
<dbReference type="Proteomes" id="UP000001055">
    <property type="component" value="Unassembled WGS sequence"/>
</dbReference>
<dbReference type="GO" id="GO:0005737">
    <property type="term" value="C:cytoplasm"/>
    <property type="evidence" value="ECO:0000318"/>
    <property type="project" value="GO_Central"/>
</dbReference>
<dbReference type="GO" id="GO:0030429">
    <property type="term" value="F:kynureninase activity"/>
    <property type="evidence" value="ECO:0000318"/>
    <property type="project" value="GO_Central"/>
</dbReference>
<dbReference type="GO" id="GO:0030170">
    <property type="term" value="F:pyridoxal phosphate binding"/>
    <property type="evidence" value="ECO:0007669"/>
    <property type="project" value="UniProtKB-UniRule"/>
</dbReference>
<dbReference type="GO" id="GO:0034354">
    <property type="term" value="P:'de novo' NAD biosynthetic process from L-tryptophan"/>
    <property type="evidence" value="ECO:0007669"/>
    <property type="project" value="UniProtKB-UniRule"/>
</dbReference>
<dbReference type="GO" id="GO:0043420">
    <property type="term" value="P:anthranilate metabolic process"/>
    <property type="evidence" value="ECO:0000318"/>
    <property type="project" value="GO_Central"/>
</dbReference>
<dbReference type="GO" id="GO:0097053">
    <property type="term" value="P:L-kynurenine catabolic process"/>
    <property type="evidence" value="ECO:0007669"/>
    <property type="project" value="UniProtKB-UniRule"/>
</dbReference>
<dbReference type="GO" id="GO:0019441">
    <property type="term" value="P:L-tryptophan catabolic process to kynurenine"/>
    <property type="evidence" value="ECO:0000318"/>
    <property type="project" value="GO_Central"/>
</dbReference>
<dbReference type="GO" id="GO:0019805">
    <property type="term" value="P:quinolinate biosynthetic process"/>
    <property type="evidence" value="ECO:0007669"/>
    <property type="project" value="UniProtKB-UniRule"/>
</dbReference>
<dbReference type="FunFam" id="3.40.640.10:FF:000031">
    <property type="entry name" value="Kynureninase"/>
    <property type="match status" value="1"/>
</dbReference>
<dbReference type="Gene3D" id="3.90.1150.10">
    <property type="entry name" value="Aspartate Aminotransferase, domain 1"/>
    <property type="match status" value="1"/>
</dbReference>
<dbReference type="Gene3D" id="3.40.640.10">
    <property type="entry name" value="Type I PLP-dependent aspartate aminotransferase-like (Major domain)"/>
    <property type="match status" value="1"/>
</dbReference>
<dbReference type="HAMAP" id="MF_01970">
    <property type="entry name" value="Kynureninase"/>
    <property type="match status" value="1"/>
</dbReference>
<dbReference type="InterPro" id="IPR000192">
    <property type="entry name" value="Aminotrans_V_dom"/>
</dbReference>
<dbReference type="InterPro" id="IPR010111">
    <property type="entry name" value="Kynureninase"/>
</dbReference>
<dbReference type="InterPro" id="IPR015424">
    <property type="entry name" value="PyrdxlP-dep_Trfase"/>
</dbReference>
<dbReference type="InterPro" id="IPR015421">
    <property type="entry name" value="PyrdxlP-dep_Trfase_major"/>
</dbReference>
<dbReference type="InterPro" id="IPR015422">
    <property type="entry name" value="PyrdxlP-dep_Trfase_small"/>
</dbReference>
<dbReference type="NCBIfam" id="TIGR01814">
    <property type="entry name" value="kynureninase"/>
    <property type="match status" value="1"/>
</dbReference>
<dbReference type="PANTHER" id="PTHR14084">
    <property type="entry name" value="KYNURENINASE"/>
    <property type="match status" value="1"/>
</dbReference>
<dbReference type="PANTHER" id="PTHR14084:SF0">
    <property type="entry name" value="KYNURENINASE"/>
    <property type="match status" value="1"/>
</dbReference>
<dbReference type="Pfam" id="PF00266">
    <property type="entry name" value="Aminotran_5"/>
    <property type="match status" value="1"/>
</dbReference>
<dbReference type="Pfam" id="PF22580">
    <property type="entry name" value="KYNU_C"/>
    <property type="match status" value="1"/>
</dbReference>
<dbReference type="PIRSF" id="PIRSF038800">
    <property type="entry name" value="KYNU"/>
    <property type="match status" value="1"/>
</dbReference>
<dbReference type="SUPFAM" id="SSF53383">
    <property type="entry name" value="PLP-dependent transferases"/>
    <property type="match status" value="1"/>
</dbReference>
<keyword id="KW-0963">Cytoplasm</keyword>
<keyword id="KW-0378">Hydrolase</keyword>
<keyword id="KW-0662">Pyridine nucleotide biosynthesis</keyword>
<keyword id="KW-0663">Pyridoxal phosphate</keyword>
<name>KYNU1_PHANO</name>
<proteinExistence type="inferred from homology"/>
<feature type="chain" id="PRO_0000356982" description="Kynureninase 1">
    <location>
        <begin position="1"/>
        <end position="506"/>
    </location>
</feature>
<feature type="region of interest" description="Disordered" evidence="2">
    <location>
        <begin position="303"/>
        <end position="322"/>
    </location>
</feature>
<feature type="compositionally biased region" description="Low complexity" evidence="2">
    <location>
        <begin position="303"/>
        <end position="319"/>
    </location>
</feature>
<feature type="binding site" evidence="1">
    <location>
        <position position="141"/>
    </location>
    <ligand>
        <name>pyridoxal 5'-phosphate</name>
        <dbReference type="ChEBI" id="CHEBI:597326"/>
    </ligand>
</feature>
<feature type="binding site" evidence="1">
    <location>
        <position position="142"/>
    </location>
    <ligand>
        <name>pyridoxal 5'-phosphate</name>
        <dbReference type="ChEBI" id="CHEBI:597326"/>
    </ligand>
</feature>
<feature type="binding site" evidence="1">
    <location>
        <begin position="169"/>
        <end position="172"/>
    </location>
    <ligand>
        <name>pyridoxal 5'-phosphate</name>
        <dbReference type="ChEBI" id="CHEBI:597326"/>
    </ligand>
</feature>
<feature type="binding site" evidence="1">
    <location>
        <position position="254"/>
    </location>
    <ligand>
        <name>pyridoxal 5'-phosphate</name>
        <dbReference type="ChEBI" id="CHEBI:597326"/>
    </ligand>
</feature>
<feature type="binding site" evidence="1">
    <location>
        <position position="257"/>
    </location>
    <ligand>
        <name>pyridoxal 5'-phosphate</name>
        <dbReference type="ChEBI" id="CHEBI:597326"/>
    </ligand>
</feature>
<feature type="binding site" evidence="1">
    <location>
        <position position="279"/>
    </location>
    <ligand>
        <name>pyridoxal 5'-phosphate</name>
        <dbReference type="ChEBI" id="CHEBI:597326"/>
    </ligand>
</feature>
<feature type="binding site" evidence="1">
    <location>
        <position position="334"/>
    </location>
    <ligand>
        <name>pyridoxal 5'-phosphate</name>
        <dbReference type="ChEBI" id="CHEBI:597326"/>
    </ligand>
</feature>
<feature type="binding site" evidence="1">
    <location>
        <position position="362"/>
    </location>
    <ligand>
        <name>pyridoxal 5'-phosphate</name>
        <dbReference type="ChEBI" id="CHEBI:597326"/>
    </ligand>
</feature>
<feature type="modified residue" description="N6-(pyridoxal phosphate)lysine" evidence="1">
    <location>
        <position position="280"/>
    </location>
</feature>
<sequence>MSQTTNSYDSFQDADLCSAAFAEKQDEKDKLTKLREDFYIPTKGDLINKKYGFQKSGNNAKGHENGKCIYFCGNSLGLQPTRTKEYINRYLDTWASKGVFGHFTDYEGGLPPWLHIDDAVKEQTSKIVGALPSEVVIMETLTANLHLLMSSFYRPTKDRWKIIIEGKAFPSDHYAALSQIAHHDLDPSALITIEPPSSSAPYLSNEHILSVISKHAATTALVLLPGIQFYSGQFFDIELITRHCRALGITVGWDLAHAVGNVPLKLHDWNVDFAAWCNYKYMSGGPGVIGGAFVHERHGTVGETAPTTTPDGTNGNPKTISDESLTYRPRLSGWWGNDKSSRFTMDNKFVPIPGASGYQLSNPSALDMTSVMASLDVFALTTMDALRERSIRLTGYLEARLLRYPGGEPPYTIITPTNPAERGAQLSVMLRPGMLDSVLHHLEKEGVVVDERKPDVLRIAPAPLYNTFRDVHDFIGIFHEACRKALVKPAEAPKHSEGVPKAIQTT</sequence>
<reference key="1">
    <citation type="journal article" date="2007" name="Plant Cell">
        <title>Dothideomycete-plant interactions illuminated by genome sequencing and EST analysis of the wheat pathogen Stagonospora nodorum.</title>
        <authorList>
            <person name="Hane J.K."/>
            <person name="Lowe R.G.T."/>
            <person name="Solomon P.S."/>
            <person name="Tan K.-C."/>
            <person name="Schoch C.L."/>
            <person name="Spatafora J.W."/>
            <person name="Crous P.W."/>
            <person name="Kodira C.D."/>
            <person name="Birren B.W."/>
            <person name="Galagan J.E."/>
            <person name="Torriani S.F.F."/>
            <person name="McDonald B.A."/>
            <person name="Oliver R.P."/>
        </authorList>
    </citation>
    <scope>NUCLEOTIDE SEQUENCE [LARGE SCALE GENOMIC DNA]</scope>
    <source>
        <strain>SN15 / ATCC MYA-4574 / FGSC 10173</strain>
    </source>
</reference>
<gene>
    <name evidence="1" type="primary">BNA5-1</name>
    <name type="ORF">SNOG_08382</name>
</gene>
<accession>Q0UIN2</accession>